<feature type="chain" id="PRO_0000183493" description="Cytochrome c oxidase subunit 2">
    <location>
        <begin position="1"/>
        <end position="228"/>
    </location>
</feature>
<feature type="topological domain" description="Mitochondrial intermembrane" evidence="2">
    <location>
        <begin position="1"/>
        <end position="26"/>
    </location>
</feature>
<feature type="transmembrane region" description="Helical" evidence="2">
    <location>
        <begin position="27"/>
        <end position="47"/>
    </location>
</feature>
<feature type="topological domain" description="Mitochondrial matrix" evidence="2">
    <location>
        <begin position="48"/>
        <end position="60"/>
    </location>
</feature>
<feature type="transmembrane region" description="Helical" evidence="2">
    <location>
        <begin position="61"/>
        <end position="81"/>
    </location>
</feature>
<feature type="topological domain" description="Mitochondrial intermembrane" evidence="2">
    <location>
        <begin position="82"/>
        <end position="228"/>
    </location>
</feature>
<feature type="binding site" evidence="1">
    <location>
        <position position="161"/>
    </location>
    <ligand>
        <name>Cu cation</name>
        <dbReference type="ChEBI" id="CHEBI:23378"/>
        <label>A1</label>
    </ligand>
</feature>
<feature type="binding site" evidence="1">
    <location>
        <position position="196"/>
    </location>
    <ligand>
        <name>Cu cation</name>
        <dbReference type="ChEBI" id="CHEBI:23378"/>
        <label>A1</label>
    </ligand>
</feature>
<feature type="binding site" evidence="1">
    <location>
        <position position="196"/>
    </location>
    <ligand>
        <name>Cu cation</name>
        <dbReference type="ChEBI" id="CHEBI:23378"/>
        <label>A2</label>
    </ligand>
</feature>
<feature type="binding site" evidence="1">
    <location>
        <position position="198"/>
    </location>
    <ligand>
        <name>Cu cation</name>
        <dbReference type="ChEBI" id="CHEBI:23378"/>
        <label>A2</label>
    </ligand>
</feature>
<feature type="binding site" evidence="1">
    <location>
        <position position="198"/>
    </location>
    <ligand>
        <name>Mg(2+)</name>
        <dbReference type="ChEBI" id="CHEBI:18420"/>
        <note>ligand shared with subunit 1</note>
    </ligand>
</feature>
<feature type="binding site" evidence="1">
    <location>
        <position position="200"/>
    </location>
    <ligand>
        <name>Cu cation</name>
        <dbReference type="ChEBI" id="CHEBI:23378"/>
        <label>A1</label>
    </ligand>
</feature>
<feature type="binding site" evidence="1">
    <location>
        <position position="200"/>
    </location>
    <ligand>
        <name>Cu cation</name>
        <dbReference type="ChEBI" id="CHEBI:23378"/>
        <label>A2</label>
    </ligand>
</feature>
<feature type="binding site" evidence="1">
    <location>
        <position position="204"/>
    </location>
    <ligand>
        <name>Cu cation</name>
        <dbReference type="ChEBI" id="CHEBI:23378"/>
        <label>A2</label>
    </ligand>
</feature>
<feature type="binding site" evidence="1">
    <location>
        <position position="207"/>
    </location>
    <ligand>
        <name>Cu cation</name>
        <dbReference type="ChEBI" id="CHEBI:23378"/>
        <label>A1</label>
    </ligand>
</feature>
<sequence>MATWANLGLQDSSSPLMEQLNFFHDHTLLILTMITILVGYIMGMLMFNQFTNRYLLHGQTIEIIWTVLPAIILMFIALPSLRLLYLMDEINTPSITLKSVGHQWYWSYEYSDFLNLEFDSYMIPTNELETNGFRLLDVDNRVVLPVNNQIRILVTATDVLHSWTVPSLGVKVDATPGRLNQLNFLINRPGLFFGQCSEICGANHSFMPIVIESIPMNYFIKWITNMTN</sequence>
<dbReference type="EC" id="7.1.1.9"/>
<dbReference type="EMBL" id="L04272">
    <property type="protein sequence ID" value="AAA93542.2"/>
    <property type="status" value="ALT_SEQ"/>
    <property type="molecule type" value="Genomic_DNA"/>
</dbReference>
<dbReference type="SMR" id="P33505"/>
<dbReference type="GO" id="GO:0005743">
    <property type="term" value="C:mitochondrial inner membrane"/>
    <property type="evidence" value="ECO:0007669"/>
    <property type="project" value="UniProtKB-SubCell"/>
</dbReference>
<dbReference type="GO" id="GO:0005507">
    <property type="term" value="F:copper ion binding"/>
    <property type="evidence" value="ECO:0007669"/>
    <property type="project" value="InterPro"/>
</dbReference>
<dbReference type="GO" id="GO:0004129">
    <property type="term" value="F:cytochrome-c oxidase activity"/>
    <property type="evidence" value="ECO:0007669"/>
    <property type="project" value="UniProtKB-EC"/>
</dbReference>
<dbReference type="GO" id="GO:0042773">
    <property type="term" value="P:ATP synthesis coupled electron transport"/>
    <property type="evidence" value="ECO:0007669"/>
    <property type="project" value="TreeGrafter"/>
</dbReference>
<dbReference type="CDD" id="cd13912">
    <property type="entry name" value="CcO_II_C"/>
    <property type="match status" value="1"/>
</dbReference>
<dbReference type="FunFam" id="1.10.287.90:FF:000006">
    <property type="entry name" value="Cytochrome c oxidase subunit 2"/>
    <property type="match status" value="1"/>
</dbReference>
<dbReference type="FunFam" id="2.60.40.420:FF:000001">
    <property type="entry name" value="Cytochrome c oxidase subunit 2"/>
    <property type="match status" value="1"/>
</dbReference>
<dbReference type="Gene3D" id="1.10.287.90">
    <property type="match status" value="1"/>
</dbReference>
<dbReference type="Gene3D" id="2.60.40.420">
    <property type="entry name" value="Cupredoxins - blue copper proteins"/>
    <property type="match status" value="1"/>
</dbReference>
<dbReference type="InterPro" id="IPR045187">
    <property type="entry name" value="CcO_II"/>
</dbReference>
<dbReference type="InterPro" id="IPR002429">
    <property type="entry name" value="CcO_II-like_C"/>
</dbReference>
<dbReference type="InterPro" id="IPR034210">
    <property type="entry name" value="CcO_II_C"/>
</dbReference>
<dbReference type="InterPro" id="IPR001505">
    <property type="entry name" value="Copper_CuA"/>
</dbReference>
<dbReference type="InterPro" id="IPR008972">
    <property type="entry name" value="Cupredoxin"/>
</dbReference>
<dbReference type="InterPro" id="IPR014222">
    <property type="entry name" value="Cyt_c_oxidase_su2"/>
</dbReference>
<dbReference type="InterPro" id="IPR011759">
    <property type="entry name" value="Cyt_c_oxidase_su2_TM_dom"/>
</dbReference>
<dbReference type="InterPro" id="IPR036257">
    <property type="entry name" value="Cyt_c_oxidase_su2_TM_sf"/>
</dbReference>
<dbReference type="NCBIfam" id="TIGR02866">
    <property type="entry name" value="CoxB"/>
    <property type="match status" value="1"/>
</dbReference>
<dbReference type="PANTHER" id="PTHR22888:SF9">
    <property type="entry name" value="CYTOCHROME C OXIDASE SUBUNIT 2"/>
    <property type="match status" value="1"/>
</dbReference>
<dbReference type="PANTHER" id="PTHR22888">
    <property type="entry name" value="CYTOCHROME C OXIDASE, SUBUNIT II"/>
    <property type="match status" value="1"/>
</dbReference>
<dbReference type="Pfam" id="PF00116">
    <property type="entry name" value="COX2"/>
    <property type="match status" value="1"/>
</dbReference>
<dbReference type="Pfam" id="PF02790">
    <property type="entry name" value="COX2_TM"/>
    <property type="match status" value="1"/>
</dbReference>
<dbReference type="PRINTS" id="PR01166">
    <property type="entry name" value="CYCOXIDASEII"/>
</dbReference>
<dbReference type="SUPFAM" id="SSF49503">
    <property type="entry name" value="Cupredoxins"/>
    <property type="match status" value="1"/>
</dbReference>
<dbReference type="SUPFAM" id="SSF81464">
    <property type="entry name" value="Cytochrome c oxidase subunit II-like, transmembrane region"/>
    <property type="match status" value="1"/>
</dbReference>
<dbReference type="PROSITE" id="PS00078">
    <property type="entry name" value="COX2"/>
    <property type="match status" value="1"/>
</dbReference>
<dbReference type="PROSITE" id="PS50857">
    <property type="entry name" value="COX2_CUA"/>
    <property type="match status" value="1"/>
</dbReference>
<dbReference type="PROSITE" id="PS50999">
    <property type="entry name" value="COX2_TM"/>
    <property type="match status" value="1"/>
</dbReference>
<accession>P33505</accession>
<proteinExistence type="inferred from homology"/>
<keyword id="KW-0186">Copper</keyword>
<keyword id="KW-0249">Electron transport</keyword>
<keyword id="KW-0460">Magnesium</keyword>
<keyword id="KW-0472">Membrane</keyword>
<keyword id="KW-0479">Metal-binding</keyword>
<keyword id="KW-0496">Mitochondrion</keyword>
<keyword id="KW-0999">Mitochondrion inner membrane</keyword>
<keyword id="KW-0679">Respiratory chain</keyword>
<keyword id="KW-1278">Translocase</keyword>
<keyword id="KW-0812">Transmembrane</keyword>
<keyword id="KW-1133">Transmembrane helix</keyword>
<keyword id="KW-0813">Transport</keyword>
<comment type="function">
    <text evidence="1">Component of the cytochrome c oxidase, the last enzyme in the mitochondrial electron transport chain which drives oxidative phosphorylation. The respiratory chain contains 3 multisubunit complexes succinate dehydrogenase (complex II, CII), ubiquinol-cytochrome c oxidoreductase (cytochrome b-c1 complex, complex III, CIII) and cytochrome c oxidase (complex IV, CIV), that cooperate to transfer electrons derived from NADH and succinate to molecular oxygen, creating an electrochemical gradient over the inner membrane that drives transmembrane transport and the ATP synthase. Cytochrome c oxidase is the component of the respiratory chain that catalyzes the reduction of oxygen to water. Electrons originating from reduced cytochrome c in the intermembrane space (IMS) are transferred via the dinuclear copper A center (CU(A)) of subunit 2 and heme A of subunit 1 to the active site in subunit 1, a binuclear center (BNC) formed by heme A3 and copper B (CU(B)). The BNC reduces molecular oxygen to 2 water molecules using 4 electrons from cytochrome c in the IMS and 4 protons from the mitochondrial matrix.</text>
</comment>
<comment type="catalytic activity">
    <reaction evidence="1">
        <text>4 Fe(II)-[cytochrome c] + O2 + 8 H(+)(in) = 4 Fe(III)-[cytochrome c] + 2 H2O + 4 H(+)(out)</text>
        <dbReference type="Rhea" id="RHEA:11436"/>
        <dbReference type="Rhea" id="RHEA-COMP:10350"/>
        <dbReference type="Rhea" id="RHEA-COMP:14399"/>
        <dbReference type="ChEBI" id="CHEBI:15377"/>
        <dbReference type="ChEBI" id="CHEBI:15378"/>
        <dbReference type="ChEBI" id="CHEBI:15379"/>
        <dbReference type="ChEBI" id="CHEBI:29033"/>
        <dbReference type="ChEBI" id="CHEBI:29034"/>
        <dbReference type="EC" id="7.1.1.9"/>
    </reaction>
    <physiologicalReaction direction="left-to-right" evidence="1">
        <dbReference type="Rhea" id="RHEA:11437"/>
    </physiologicalReaction>
</comment>
<comment type="cofactor">
    <cofactor evidence="1">
        <name>Cu cation</name>
        <dbReference type="ChEBI" id="CHEBI:23378"/>
    </cofactor>
    <text evidence="1">Binds a dinuclear copper A center per subunit.</text>
</comment>
<comment type="subunit">
    <text evidence="1">Component of the cytochrome c oxidase (complex IV, CIV), a multisubunit enzyme composed of a catalytic core of 3 subunits and several supernumerary subunits. The complex exists as a monomer or a dimer and forms supercomplexes (SCs) in the inner mitochondrial membrane with ubiquinol-cytochrome c oxidoreductase (cytochrome b-c1 complex, complex III, CIII).</text>
</comment>
<comment type="subcellular location">
    <subcellularLocation>
        <location evidence="1">Mitochondrion inner membrane</location>
        <topology evidence="1">Multi-pass membrane protein</topology>
    </subcellularLocation>
</comment>
<comment type="similarity">
    <text evidence="3">Belongs to the cytochrome c oxidase subunit 2 family.</text>
</comment>
<reference key="1">
    <citation type="journal article" date="1990" name="Arch. Insect Biochem. Physiol.">
        <title>Cloning of the mitochondrial genome of Anopheles quadrimaculatus.</title>
        <authorList>
            <person name="Cockburn A.F."/>
            <person name="Mitchell S.E."/>
            <person name="Seawright J.A."/>
        </authorList>
    </citation>
    <scope>NUCLEOTIDE SEQUENCE [GENOMIC DNA]</scope>
    <source>
        <strain>Orlando</strain>
    </source>
</reference>
<evidence type="ECO:0000250" key="1">
    <source>
        <dbReference type="UniProtKB" id="P00410"/>
    </source>
</evidence>
<evidence type="ECO:0000255" key="2"/>
<evidence type="ECO:0000305" key="3"/>
<protein>
    <recommendedName>
        <fullName>Cytochrome c oxidase subunit 2</fullName>
        <ecNumber>7.1.1.9</ecNumber>
    </recommendedName>
    <alternativeName>
        <fullName>Cytochrome c oxidase polypeptide II</fullName>
    </alternativeName>
</protein>
<organism>
    <name type="scientific">Anopheles quadrimaculatus</name>
    <name type="common">Common malaria mosquito</name>
    <dbReference type="NCBI Taxonomy" id="7166"/>
    <lineage>
        <taxon>Eukaryota</taxon>
        <taxon>Metazoa</taxon>
        <taxon>Ecdysozoa</taxon>
        <taxon>Arthropoda</taxon>
        <taxon>Hexapoda</taxon>
        <taxon>Insecta</taxon>
        <taxon>Pterygota</taxon>
        <taxon>Neoptera</taxon>
        <taxon>Endopterygota</taxon>
        <taxon>Diptera</taxon>
        <taxon>Nematocera</taxon>
        <taxon>Culicoidea</taxon>
        <taxon>Culicidae</taxon>
        <taxon>Anophelinae</taxon>
        <taxon>Anopheles</taxon>
    </lineage>
</organism>
<geneLocation type="mitochondrion"/>
<name>COX2_ANOQU</name>
<gene>
    <name type="primary">COXII</name>
    <name type="synonym">COII</name>
</gene>